<evidence type="ECO:0000255" key="1">
    <source>
        <dbReference type="HAMAP-Rule" id="MF_00366"/>
    </source>
</evidence>
<comment type="function">
    <text evidence="1">Promotes RNA polymerase assembly. Latches the N- and C-terminal regions of the beta' subunit thereby facilitating its interaction with the beta and alpha subunits.</text>
</comment>
<comment type="catalytic activity">
    <reaction evidence="1">
        <text>RNA(n) + a ribonucleoside 5'-triphosphate = RNA(n+1) + diphosphate</text>
        <dbReference type="Rhea" id="RHEA:21248"/>
        <dbReference type="Rhea" id="RHEA-COMP:14527"/>
        <dbReference type="Rhea" id="RHEA-COMP:17342"/>
        <dbReference type="ChEBI" id="CHEBI:33019"/>
        <dbReference type="ChEBI" id="CHEBI:61557"/>
        <dbReference type="ChEBI" id="CHEBI:140395"/>
        <dbReference type="EC" id="2.7.7.6"/>
    </reaction>
</comment>
<comment type="subunit">
    <text evidence="1">The RNAP catalytic core consists of 2 alpha, 1 beta, 1 beta' and 1 omega subunit. When a sigma factor is associated with the core the holoenzyme is formed, which can initiate transcription.</text>
</comment>
<comment type="similarity">
    <text evidence="1">Belongs to the RNA polymerase subunit omega family.</text>
</comment>
<protein>
    <recommendedName>
        <fullName evidence="1">DNA-directed RNA polymerase subunit omega</fullName>
        <shortName evidence="1">RNAP omega subunit</shortName>
        <ecNumber evidence="1">2.7.7.6</ecNumber>
    </recommendedName>
    <alternativeName>
        <fullName evidence="1">RNA polymerase omega subunit</fullName>
    </alternativeName>
    <alternativeName>
        <fullName evidence="1">Transcriptase subunit omega</fullName>
    </alternativeName>
</protein>
<feature type="chain" id="PRO_1000121243" description="DNA-directed RNA polymerase subunit omega">
    <location>
        <begin position="1"/>
        <end position="75"/>
    </location>
</feature>
<name>RPOZ_LYSSC</name>
<proteinExistence type="inferred from homology"/>
<keyword id="KW-0240">DNA-directed RNA polymerase</keyword>
<keyword id="KW-0548">Nucleotidyltransferase</keyword>
<keyword id="KW-0804">Transcription</keyword>
<keyword id="KW-0808">Transferase</keyword>
<gene>
    <name evidence="1" type="primary">rpoZ</name>
    <name type="ordered locus">Bsph_1485</name>
</gene>
<reference key="1">
    <citation type="journal article" date="2008" name="J. Bacteriol.">
        <title>Complete genome sequence of the mosquitocidal bacterium Bacillus sphaericus C3-41 and comparison with those of closely related Bacillus species.</title>
        <authorList>
            <person name="Hu X."/>
            <person name="Fan W."/>
            <person name="Han B."/>
            <person name="Liu H."/>
            <person name="Zheng D."/>
            <person name="Li Q."/>
            <person name="Dong W."/>
            <person name="Yan J."/>
            <person name="Gao M."/>
            <person name="Berry C."/>
            <person name="Yuan Z."/>
        </authorList>
    </citation>
    <scope>NUCLEOTIDE SEQUENCE [LARGE SCALE GENOMIC DNA]</scope>
    <source>
        <strain>C3-41</strain>
    </source>
</reference>
<organism>
    <name type="scientific">Lysinibacillus sphaericus (strain C3-41)</name>
    <dbReference type="NCBI Taxonomy" id="444177"/>
    <lineage>
        <taxon>Bacteria</taxon>
        <taxon>Bacillati</taxon>
        <taxon>Bacillota</taxon>
        <taxon>Bacilli</taxon>
        <taxon>Bacillales</taxon>
        <taxon>Bacillaceae</taxon>
        <taxon>Lysinibacillus</taxon>
    </lineage>
</organism>
<sequence length="75" mass="8563">MLYPSVDALKKEIDSKYSLVSLASKRARQMQEEQNTERLHKYVSHKYVGKALEEVAAGVLTKVSQDESTVYEDEI</sequence>
<dbReference type="EC" id="2.7.7.6" evidence="1"/>
<dbReference type="EMBL" id="CP000817">
    <property type="protein sequence ID" value="ACA39087.1"/>
    <property type="molecule type" value="Genomic_DNA"/>
</dbReference>
<dbReference type="RefSeq" id="WP_008173785.1">
    <property type="nucleotide sequence ID" value="NC_010382.1"/>
</dbReference>
<dbReference type="SMR" id="B1HQE0"/>
<dbReference type="EnsemblBacteria" id="ACA39087">
    <property type="protein sequence ID" value="ACA39087"/>
    <property type="gene ID" value="Bsph_1485"/>
</dbReference>
<dbReference type="GeneID" id="29443184"/>
<dbReference type="KEGG" id="lsp:Bsph_1485"/>
<dbReference type="HOGENOM" id="CLU_125406_6_0_9"/>
<dbReference type="Proteomes" id="UP000002164">
    <property type="component" value="Chromosome"/>
</dbReference>
<dbReference type="GO" id="GO:0000428">
    <property type="term" value="C:DNA-directed RNA polymerase complex"/>
    <property type="evidence" value="ECO:0007669"/>
    <property type="project" value="UniProtKB-KW"/>
</dbReference>
<dbReference type="GO" id="GO:0003677">
    <property type="term" value="F:DNA binding"/>
    <property type="evidence" value="ECO:0007669"/>
    <property type="project" value="UniProtKB-UniRule"/>
</dbReference>
<dbReference type="GO" id="GO:0003899">
    <property type="term" value="F:DNA-directed RNA polymerase activity"/>
    <property type="evidence" value="ECO:0007669"/>
    <property type="project" value="UniProtKB-UniRule"/>
</dbReference>
<dbReference type="GO" id="GO:0006351">
    <property type="term" value="P:DNA-templated transcription"/>
    <property type="evidence" value="ECO:0007669"/>
    <property type="project" value="UniProtKB-UniRule"/>
</dbReference>
<dbReference type="Gene3D" id="3.90.940.10">
    <property type="match status" value="1"/>
</dbReference>
<dbReference type="HAMAP" id="MF_00366">
    <property type="entry name" value="RNApol_bact_RpoZ"/>
    <property type="match status" value="1"/>
</dbReference>
<dbReference type="InterPro" id="IPR003716">
    <property type="entry name" value="DNA-dir_RNA_pol_omega"/>
</dbReference>
<dbReference type="InterPro" id="IPR006110">
    <property type="entry name" value="Pol_omega/Rpo6/RPB6"/>
</dbReference>
<dbReference type="InterPro" id="IPR036161">
    <property type="entry name" value="RPB6/omega-like_sf"/>
</dbReference>
<dbReference type="NCBIfam" id="TIGR00690">
    <property type="entry name" value="rpoZ"/>
    <property type="match status" value="1"/>
</dbReference>
<dbReference type="PANTHER" id="PTHR34476">
    <property type="entry name" value="DNA-DIRECTED RNA POLYMERASE SUBUNIT OMEGA"/>
    <property type="match status" value="1"/>
</dbReference>
<dbReference type="PANTHER" id="PTHR34476:SF1">
    <property type="entry name" value="DNA-DIRECTED RNA POLYMERASE SUBUNIT OMEGA"/>
    <property type="match status" value="1"/>
</dbReference>
<dbReference type="Pfam" id="PF01192">
    <property type="entry name" value="RNA_pol_Rpb6"/>
    <property type="match status" value="1"/>
</dbReference>
<dbReference type="SMART" id="SM01409">
    <property type="entry name" value="RNA_pol_Rpb6"/>
    <property type="match status" value="1"/>
</dbReference>
<dbReference type="SUPFAM" id="SSF63562">
    <property type="entry name" value="RPB6/omega subunit-like"/>
    <property type="match status" value="1"/>
</dbReference>
<accession>B1HQE0</accession>